<comment type="similarity">
    <text evidence="1">Belongs to the SfsA family.</text>
</comment>
<feature type="chain" id="PRO_1000008042" description="Sugar fermentation stimulation protein homolog">
    <location>
        <begin position="1"/>
        <end position="235"/>
    </location>
</feature>
<accession>Q5E2T7</accession>
<reference key="1">
    <citation type="journal article" date="2005" name="Proc. Natl. Acad. Sci. U.S.A.">
        <title>Complete genome sequence of Vibrio fischeri: a symbiotic bacterium with pathogenic congeners.</title>
        <authorList>
            <person name="Ruby E.G."/>
            <person name="Urbanowski M."/>
            <person name="Campbell J."/>
            <person name="Dunn A."/>
            <person name="Faini M."/>
            <person name="Gunsalus R."/>
            <person name="Lostroh P."/>
            <person name="Lupp C."/>
            <person name="McCann J."/>
            <person name="Millikan D."/>
            <person name="Schaefer A."/>
            <person name="Stabb E."/>
            <person name="Stevens A."/>
            <person name="Visick K."/>
            <person name="Whistler C."/>
            <person name="Greenberg E.P."/>
        </authorList>
    </citation>
    <scope>NUCLEOTIDE SEQUENCE [LARGE SCALE GENOMIC DNA]</scope>
    <source>
        <strain>ATCC 700601 / ES114</strain>
    </source>
</reference>
<protein>
    <recommendedName>
        <fullName evidence="1">Sugar fermentation stimulation protein homolog</fullName>
    </recommendedName>
</protein>
<proteinExistence type="inferred from homology"/>
<gene>
    <name evidence="1" type="primary">sfsA</name>
    <name type="ordered locus">VF_2164</name>
</gene>
<evidence type="ECO:0000255" key="1">
    <source>
        <dbReference type="HAMAP-Rule" id="MF_00095"/>
    </source>
</evidence>
<keyword id="KW-1185">Reference proteome</keyword>
<organism>
    <name type="scientific">Aliivibrio fischeri (strain ATCC 700601 / ES114)</name>
    <name type="common">Vibrio fischeri</name>
    <dbReference type="NCBI Taxonomy" id="312309"/>
    <lineage>
        <taxon>Bacteria</taxon>
        <taxon>Pseudomonadati</taxon>
        <taxon>Pseudomonadota</taxon>
        <taxon>Gammaproteobacteria</taxon>
        <taxon>Vibrionales</taxon>
        <taxon>Vibrionaceae</taxon>
        <taxon>Aliivibrio</taxon>
    </lineage>
</organism>
<dbReference type="EMBL" id="CP000020">
    <property type="protein sequence ID" value="AAW86659.1"/>
    <property type="molecule type" value="Genomic_DNA"/>
</dbReference>
<dbReference type="RefSeq" id="WP_011262607.1">
    <property type="nucleotide sequence ID" value="NC_006840.2"/>
</dbReference>
<dbReference type="RefSeq" id="YP_205547.1">
    <property type="nucleotide sequence ID" value="NC_006840.2"/>
</dbReference>
<dbReference type="SMR" id="Q5E2T7"/>
<dbReference type="STRING" id="312309.VF_2164"/>
<dbReference type="EnsemblBacteria" id="AAW86659">
    <property type="protein sequence ID" value="AAW86659"/>
    <property type="gene ID" value="VF_2164"/>
</dbReference>
<dbReference type="GeneID" id="54164882"/>
<dbReference type="KEGG" id="vfi:VF_2164"/>
<dbReference type="PATRIC" id="fig|312309.11.peg.2205"/>
<dbReference type="eggNOG" id="COG1489">
    <property type="taxonomic scope" value="Bacteria"/>
</dbReference>
<dbReference type="HOGENOM" id="CLU_052299_2_0_6"/>
<dbReference type="OrthoDB" id="9802365at2"/>
<dbReference type="Proteomes" id="UP000000537">
    <property type="component" value="Chromosome I"/>
</dbReference>
<dbReference type="GO" id="GO:0003677">
    <property type="term" value="F:DNA binding"/>
    <property type="evidence" value="ECO:0007669"/>
    <property type="project" value="InterPro"/>
</dbReference>
<dbReference type="CDD" id="cd22359">
    <property type="entry name" value="SfsA-like_bacterial"/>
    <property type="match status" value="1"/>
</dbReference>
<dbReference type="FunFam" id="2.40.50.580:FF:000001">
    <property type="entry name" value="Sugar fermentation stimulation protein A"/>
    <property type="match status" value="1"/>
</dbReference>
<dbReference type="FunFam" id="3.40.1350.60:FF:000001">
    <property type="entry name" value="Sugar fermentation stimulation protein A"/>
    <property type="match status" value="1"/>
</dbReference>
<dbReference type="Gene3D" id="2.40.50.580">
    <property type="match status" value="1"/>
</dbReference>
<dbReference type="Gene3D" id="3.40.1350.60">
    <property type="match status" value="1"/>
</dbReference>
<dbReference type="HAMAP" id="MF_00095">
    <property type="entry name" value="SfsA"/>
    <property type="match status" value="1"/>
</dbReference>
<dbReference type="InterPro" id="IPR005224">
    <property type="entry name" value="SfsA"/>
</dbReference>
<dbReference type="InterPro" id="IPR040452">
    <property type="entry name" value="SfsA_C"/>
</dbReference>
<dbReference type="InterPro" id="IPR041465">
    <property type="entry name" value="SfsA_N"/>
</dbReference>
<dbReference type="NCBIfam" id="TIGR00230">
    <property type="entry name" value="sfsA"/>
    <property type="match status" value="1"/>
</dbReference>
<dbReference type="PANTHER" id="PTHR30545">
    <property type="entry name" value="SUGAR FERMENTATION STIMULATION PROTEIN A"/>
    <property type="match status" value="1"/>
</dbReference>
<dbReference type="PANTHER" id="PTHR30545:SF2">
    <property type="entry name" value="SUGAR FERMENTATION STIMULATION PROTEIN A"/>
    <property type="match status" value="1"/>
</dbReference>
<dbReference type="Pfam" id="PF03749">
    <property type="entry name" value="SfsA"/>
    <property type="match status" value="1"/>
</dbReference>
<dbReference type="Pfam" id="PF17746">
    <property type="entry name" value="SfsA_N"/>
    <property type="match status" value="1"/>
</dbReference>
<name>SFSA_ALIF1</name>
<sequence length="235" mass="26588">MKFEPELESGKLIKRYKRFLADIKLDDNSERTIHCANTGAMTGCAEPDSTVFFSTSSNLKRKYPNSWELSVTENNHTICVNTLRSNQLVVEAIQDQNIKELTEYDELKTEVKYGSENSRIDILLTGKSLPDCYIEVKSVTLLSESGQGFFPDAVTTRGQKHLRELSEMAQLGHKAILFFAVLHSGIEKVSIAHHIDQQYHSLLIDAIENGVNILCYQAEMSSKEMKIVRKLPFSI</sequence>